<evidence type="ECO:0000255" key="1">
    <source>
        <dbReference type="HAMAP-Rule" id="MF_01361"/>
    </source>
</evidence>
<protein>
    <recommendedName>
        <fullName evidence="1">UPF0391 membrane protein PputGB1_0151</fullName>
    </recommendedName>
</protein>
<feature type="chain" id="PRO_1000086962" description="UPF0391 membrane protein PputGB1_0151">
    <location>
        <begin position="1"/>
        <end position="53"/>
    </location>
</feature>
<feature type="transmembrane region" description="Helical" evidence="1">
    <location>
        <begin position="4"/>
        <end position="24"/>
    </location>
</feature>
<feature type="transmembrane region" description="Helical" evidence="1">
    <location>
        <begin position="29"/>
        <end position="49"/>
    </location>
</feature>
<dbReference type="EMBL" id="CP000926">
    <property type="protein sequence ID" value="ABY96067.1"/>
    <property type="molecule type" value="Genomic_DNA"/>
</dbReference>
<dbReference type="RefSeq" id="WP_003252966.1">
    <property type="nucleotide sequence ID" value="NC_010322.1"/>
</dbReference>
<dbReference type="KEGG" id="ppg:PputGB1_0151"/>
<dbReference type="eggNOG" id="COG5487">
    <property type="taxonomic scope" value="Bacteria"/>
</dbReference>
<dbReference type="HOGENOM" id="CLU_187346_2_1_6"/>
<dbReference type="Proteomes" id="UP000002157">
    <property type="component" value="Chromosome"/>
</dbReference>
<dbReference type="GO" id="GO:0005886">
    <property type="term" value="C:plasma membrane"/>
    <property type="evidence" value="ECO:0007669"/>
    <property type="project" value="UniProtKB-SubCell"/>
</dbReference>
<dbReference type="HAMAP" id="MF_01361">
    <property type="entry name" value="UPF0391"/>
    <property type="match status" value="1"/>
</dbReference>
<dbReference type="InterPro" id="IPR009760">
    <property type="entry name" value="DUF1328"/>
</dbReference>
<dbReference type="NCBIfam" id="NF010226">
    <property type="entry name" value="PRK13682.1-1"/>
    <property type="match status" value="1"/>
</dbReference>
<dbReference type="NCBIfam" id="NF010229">
    <property type="entry name" value="PRK13682.1-4"/>
    <property type="match status" value="1"/>
</dbReference>
<dbReference type="Pfam" id="PF07043">
    <property type="entry name" value="DUF1328"/>
    <property type="match status" value="1"/>
</dbReference>
<dbReference type="PIRSF" id="PIRSF036466">
    <property type="entry name" value="UCP036466"/>
    <property type="match status" value="1"/>
</dbReference>
<organism>
    <name type="scientific">Pseudomonas putida (strain GB-1)</name>
    <dbReference type="NCBI Taxonomy" id="76869"/>
    <lineage>
        <taxon>Bacteria</taxon>
        <taxon>Pseudomonadati</taxon>
        <taxon>Pseudomonadota</taxon>
        <taxon>Gammaproteobacteria</taxon>
        <taxon>Pseudomonadales</taxon>
        <taxon>Pseudomonadaceae</taxon>
        <taxon>Pseudomonas</taxon>
    </lineage>
</organism>
<accession>B0KG16</accession>
<proteinExistence type="inferred from homology"/>
<comment type="subcellular location">
    <subcellularLocation>
        <location evidence="1">Cell membrane</location>
        <topology evidence="1">Multi-pass membrane protein</topology>
    </subcellularLocation>
</comment>
<comment type="similarity">
    <text evidence="1">Belongs to the UPF0391 family.</text>
</comment>
<sequence length="53" mass="5506">MLSWAITFLIIAIVAAVLGFGGIAGAATGIAKILFIVFLVLFVASFFFGRGRG</sequence>
<reference key="1">
    <citation type="submission" date="2008-01" db="EMBL/GenBank/DDBJ databases">
        <title>Complete sequence of Pseudomonas putida GB-1.</title>
        <authorList>
            <consortium name="US DOE Joint Genome Institute"/>
            <person name="Copeland A."/>
            <person name="Lucas S."/>
            <person name="Lapidus A."/>
            <person name="Barry K."/>
            <person name="Glavina del Rio T."/>
            <person name="Dalin E."/>
            <person name="Tice H."/>
            <person name="Pitluck S."/>
            <person name="Bruce D."/>
            <person name="Goodwin L."/>
            <person name="Chertkov O."/>
            <person name="Brettin T."/>
            <person name="Detter J.C."/>
            <person name="Han C."/>
            <person name="Kuske C.R."/>
            <person name="Schmutz J."/>
            <person name="Larimer F."/>
            <person name="Land M."/>
            <person name="Hauser L."/>
            <person name="Kyrpides N."/>
            <person name="Kim E."/>
            <person name="McCarthy J.K."/>
            <person name="Richardson P."/>
        </authorList>
    </citation>
    <scope>NUCLEOTIDE SEQUENCE [LARGE SCALE GENOMIC DNA]</scope>
    <source>
        <strain>GB-1</strain>
    </source>
</reference>
<name>Y151_PSEPG</name>
<keyword id="KW-1003">Cell membrane</keyword>
<keyword id="KW-0472">Membrane</keyword>
<keyword id="KW-0812">Transmembrane</keyword>
<keyword id="KW-1133">Transmembrane helix</keyword>
<gene>
    <name type="ordered locus">PputGB1_0151</name>
</gene>